<proteinExistence type="evidence at protein level"/>
<gene>
    <name evidence="4" type="primary">cdnE</name>
    <name type="ORF">FS896_RS19160</name>
</gene>
<keyword id="KW-0051">Antiviral defense</keyword>
<keyword id="KW-0067">ATP-binding</keyword>
<keyword id="KW-0460">Magnesium</keyword>
<keyword id="KW-0479">Metal-binding</keyword>
<keyword id="KW-0546">Nucleotide metabolism</keyword>
<keyword id="KW-0547">Nucleotide-binding</keyword>
<keyword id="KW-0548">Nucleotidyltransferase</keyword>
<keyword id="KW-0808">Transferase</keyword>
<dbReference type="EC" id="2.7.7.-" evidence="2"/>
<dbReference type="EMBL" id="CABHQK010000182">
    <property type="status" value="NOT_ANNOTATED_CDS"/>
    <property type="molecule type" value="Genomic_DNA"/>
</dbReference>
<dbReference type="RefSeq" id="WP_145567548.1">
    <property type="nucleotide sequence ID" value="NZ_CABHQK010000182.1"/>
</dbReference>
<dbReference type="SMR" id="P0DXA5"/>
<dbReference type="GO" id="GO:0005524">
    <property type="term" value="F:ATP binding"/>
    <property type="evidence" value="ECO:0007669"/>
    <property type="project" value="UniProtKB-KW"/>
</dbReference>
<dbReference type="GO" id="GO:0046872">
    <property type="term" value="F:metal ion binding"/>
    <property type="evidence" value="ECO:0007669"/>
    <property type="project" value="UniProtKB-KW"/>
</dbReference>
<dbReference type="GO" id="GO:0016779">
    <property type="term" value="F:nucleotidyltransferase activity"/>
    <property type="evidence" value="ECO:0007669"/>
    <property type="project" value="UniProtKB-KW"/>
</dbReference>
<dbReference type="GO" id="GO:0051607">
    <property type="term" value="P:defense response to virus"/>
    <property type="evidence" value="ECO:0007669"/>
    <property type="project" value="UniProtKB-KW"/>
</dbReference>
<dbReference type="GO" id="GO:0009117">
    <property type="term" value="P:nucleotide metabolic process"/>
    <property type="evidence" value="ECO:0007669"/>
    <property type="project" value="UniProtKB-KW"/>
</dbReference>
<accession>P0DXA5</accession>
<protein>
    <recommendedName>
        <fullName evidence="5">Cyclic dinucleotide synthase CdnE</fullName>
        <shortName evidence="4">Ya-CdnE02</shortName>
        <ecNumber evidence="2">2.7.7.-</ecNumber>
    </recommendedName>
    <alternativeName>
        <fullName evidence="4">cGAS/DncV-like nucleotidyltransferase</fullName>
        <shortName evidence="3 4">CD-NTase</shortName>
    </alternativeName>
</protein>
<name>CDNE_YERAE</name>
<organism>
    <name type="scientific">Yersinia aleksiciae</name>
    <dbReference type="NCBI Taxonomy" id="263819"/>
    <lineage>
        <taxon>Bacteria</taxon>
        <taxon>Pseudomonadati</taxon>
        <taxon>Pseudomonadota</taxon>
        <taxon>Gammaproteobacteria</taxon>
        <taxon>Enterobacterales</taxon>
        <taxon>Yersiniaceae</taxon>
        <taxon>Yersinia</taxon>
    </lineage>
</organism>
<evidence type="ECO:0000250" key="1">
    <source>
        <dbReference type="UniProtKB" id="P0DSP3"/>
    </source>
</evidence>
<evidence type="ECO:0000269" key="2">
    <source>
    </source>
</evidence>
<evidence type="ECO:0000303" key="3">
    <source>
    </source>
</evidence>
<evidence type="ECO:0000303" key="4">
    <source>
    </source>
</evidence>
<evidence type="ECO:0000303" key="5">
    <source ref="1"/>
</evidence>
<evidence type="ECO:0000305" key="6"/>
<evidence type="ECO:0000305" key="7">
    <source>
    </source>
</evidence>
<evidence type="ECO:0000305" key="8">
    <source>
    </source>
</evidence>
<reference key="1">
    <citation type="submission" date="2019-07" db="EMBL/GenBank/DDBJ databases">
        <authorList>
            <person name="Criscuolo A."/>
        </authorList>
    </citation>
    <scope>NUCLEOTIDE SEQUENCE [LARGE SCALE GENOMIC DNA]</scope>
    <source>
        <strain>IP28587</strain>
    </source>
</reference>
<reference key="2">
    <citation type="journal article" date="2020" name="Nat. Microbiol.">
        <title>Diversity and classification of cyclic-oligonucleotide-based anti-phage signalling systems.</title>
        <authorList>
            <person name="Millman A."/>
            <person name="Melamed S."/>
            <person name="Amitai G."/>
            <person name="Sorek R."/>
        </authorList>
    </citation>
    <scope>CLASSIFICATION AND NOMENCLATURE</scope>
</reference>
<reference key="3">
    <citation type="journal article" date="2021" name="Mol. Cell">
        <title>Effector-mediated membrane disruption controls cell death in CBASS antiphage defense.</title>
        <authorList>
            <person name="Duncan-Lowey B."/>
            <person name="McNamara-Bordewick N.K."/>
            <person name="Tal N."/>
            <person name="Sorek R."/>
            <person name="Kranzusch P.J."/>
        </authorList>
    </citation>
    <scope>FUNCTION</scope>
    <scope>CATALYTIC ACTIVITY</scope>
    <scope>DOMAIN</scope>
    <scope>MUTAGENESIS OF 121-ASP--ASP-123</scope>
</reference>
<comment type="function">
    <text evidence="2 7 8">Cyclic nucleotide synthase (second messenger synthase) of a CBASS antivirus system (PubMed:34784509). CBASS (cyclic oligonucleotide-based antiphage signaling system) provides immunity against bacteriophage. The CD-NTase protein synthesizes cyclic nucleotides in response to infection; these serve as specific second messenger signals. The signals activate a diverse range of effectors, leading to bacterial cell death and thus abortive phage infection. The effector protein for this system is membrane protein Cap15 (PubMed:34784509). A type I-B(UU) CBASS system (PubMed:32839535).</text>
</comment>
<comment type="function">
    <text evidence="2">Cyclic dinucleotide synthase that preferentially catalyzes the synthesis of 3',3'-cyclic UMP-UMP (c-di-UMP) and 3',3'-cyclic UMP-AMP, with minor amounts of 3',3'-cyclic UMP-CMP, which are second messengers for cell signal transduction (PubMed:34784509).</text>
</comment>
<comment type="function">
    <text evidence="2">Protects E.coli against phage infection. When the CBASS operon (cap15-cdnE) is introduced in E.coli MG1655 it protects against phages T2, T4, T5, T6, SECPhi4, SECPhi6, SECPhi17, SECPhi18 and SECPhi27, but not against phage T7 (PubMed:34784509).</text>
</comment>
<comment type="catalytic activity">
    <reaction evidence="2">
        <text>2 UTP = c-di-UMP + 2 diphosphate</text>
        <dbReference type="Rhea" id="RHEA:60480"/>
        <dbReference type="ChEBI" id="CHEBI:33019"/>
        <dbReference type="ChEBI" id="CHEBI:46398"/>
        <dbReference type="ChEBI" id="CHEBI:143807"/>
    </reaction>
    <physiologicalReaction direction="left-to-right" evidence="2">
        <dbReference type="Rhea" id="RHEA:60481"/>
    </physiologicalReaction>
</comment>
<comment type="catalytic activity">
    <reaction evidence="2">
        <text>UTP + ATP = 3',3'-cUAMP + 2 diphosphate</text>
        <dbReference type="Rhea" id="RHEA:60456"/>
        <dbReference type="ChEBI" id="CHEBI:30616"/>
        <dbReference type="ChEBI" id="CHEBI:33019"/>
        <dbReference type="ChEBI" id="CHEBI:46398"/>
        <dbReference type="ChEBI" id="CHEBI:143809"/>
    </reaction>
    <physiologicalReaction direction="left-to-right" evidence="2">
        <dbReference type="Rhea" id="RHEA:60457"/>
    </physiologicalReaction>
</comment>
<comment type="catalytic activity">
    <reaction evidence="2">
        <text>UTP + CTP = cyclic CMP-UMP + 2 diphosphate</text>
        <dbReference type="Rhea" id="RHEA:60484"/>
        <dbReference type="ChEBI" id="CHEBI:33019"/>
        <dbReference type="ChEBI" id="CHEBI:37563"/>
        <dbReference type="ChEBI" id="CHEBI:46398"/>
        <dbReference type="ChEBI" id="CHEBI:143811"/>
    </reaction>
    <physiologicalReaction direction="left-to-right" evidence="2">
        <dbReference type="Rhea" id="RHEA:60485"/>
    </physiologicalReaction>
</comment>
<comment type="cofactor">
    <cofactor evidence="1">
        <name>Mg(2+)</name>
        <dbReference type="ChEBI" id="CHEBI:18420"/>
    </cofactor>
    <text evidence="1">Binds 2 Mg(2+) ions per subunit.</text>
</comment>
<comment type="domain">
    <text evidence="1">The (R/Q)xW motif controls pyrimidine nucleotide specificity in the donor pocket, while conserved Asn-229 is important for recognition of uracil in the acceptor pocket.</text>
</comment>
<comment type="similarity">
    <text evidence="6">Belongs to the CD-NTase family. E02 subfamily.</text>
</comment>
<feature type="chain" id="PRO_0000459801" description="Cyclic dinucleotide synthase CdnE">
    <location>
        <begin position="1"/>
        <end position="379"/>
    </location>
</feature>
<feature type="short sequence motif" description="Pyrimidine specificity motif (R/Q)xW in donor pocket" evidence="1">
    <location>
        <begin position="328"/>
        <end position="330"/>
    </location>
</feature>
<feature type="binding site" evidence="1">
    <location>
        <position position="107"/>
    </location>
    <ligand>
        <name>UTP</name>
        <dbReference type="ChEBI" id="CHEBI:46398"/>
        <label>acceptor</label>
    </ligand>
</feature>
<feature type="binding site" evidence="1">
    <location>
        <position position="109"/>
    </location>
    <ligand>
        <name>UTP</name>
        <dbReference type="ChEBI" id="CHEBI:46398"/>
        <label>donor</label>
    </ligand>
</feature>
<feature type="binding site" evidence="1">
    <location>
        <position position="123"/>
    </location>
    <ligand>
        <name>Mg(2+)</name>
        <dbReference type="ChEBI" id="CHEBI:18420"/>
        <label>1</label>
    </ligand>
</feature>
<feature type="binding site" evidence="1">
    <location>
        <position position="123"/>
    </location>
    <ligand>
        <name>Mg(2+)</name>
        <dbReference type="ChEBI" id="CHEBI:18420"/>
        <label>2</label>
    </ligand>
</feature>
<feature type="binding site" evidence="1">
    <location>
        <position position="123"/>
    </location>
    <ligand>
        <name>UTP</name>
        <dbReference type="ChEBI" id="CHEBI:46398"/>
        <label>acceptor</label>
    </ligand>
</feature>
<feature type="binding site" evidence="1">
    <location>
        <position position="179"/>
    </location>
    <ligand>
        <name>UTP</name>
        <dbReference type="ChEBI" id="CHEBI:46398"/>
        <label>acceptor</label>
    </ligand>
</feature>
<feature type="binding site" evidence="1">
    <location>
        <position position="193"/>
    </location>
    <ligand>
        <name>Mg(2+)</name>
        <dbReference type="ChEBI" id="CHEBI:18420"/>
        <label>2</label>
    </ligand>
</feature>
<feature type="binding site" evidence="1">
    <location>
        <position position="229"/>
    </location>
    <ligand>
        <name>UTP</name>
        <dbReference type="ChEBI" id="CHEBI:46398"/>
        <label>acceptor</label>
    </ligand>
</feature>
<feature type="binding site" evidence="1">
    <location>
        <position position="257"/>
    </location>
    <ligand>
        <name>UTP</name>
        <dbReference type="ChEBI" id="CHEBI:46398"/>
        <label>donor</label>
    </ligand>
</feature>
<feature type="binding site" evidence="1">
    <location>
        <position position="274"/>
    </location>
    <ligand>
        <name>UTP</name>
        <dbReference type="ChEBI" id="CHEBI:46398"/>
        <label>donor</label>
    </ligand>
</feature>
<feature type="site" description="Important for uracil base recognition in acceptor pocket" evidence="1">
    <location>
        <position position="229"/>
    </location>
</feature>
<feature type="mutagenesis site" description="No longer protects against phage." evidence="2">
    <original>DVD</original>
    <variation>AVA</variation>
    <location>
        <begin position="121"/>
        <end position="123"/>
    </location>
</feature>
<sequence length="379" mass="43322">MPNPAFSARIERMKLRRKGTSDQLRVATESISNQRYDGLEKYTLLEDVLHLSESWENRGKGDSAIRYIIGAMQPVDARYTEISFETASRIENQLSKKLAHNLDFRVQGSVPLDIHIKGFSDVDLLIIDTQMLMYDVNGGGSYSPTSRDGRDVIIELREAARDALEMAFPTALVDDNNAKSLRITGGSLQREVDVVPSIWWDTKEYQSMKREEDRGVTIIDKNTRERIYNAPFLHIKRIKDKCDQCNGGIRKSIRLLKTLKADSKDEGSDIDLSSYDIASLMFHADANNLNHSTYYELAVLVETHRLLNYLSQNYEVAMQLDVPNGTRKIFEKPESHVELLKLTEMVNSVVTEVLREITGRPTDFYANDKCDVLRKQMVY</sequence>